<evidence type="ECO:0000255" key="1">
    <source>
        <dbReference type="HAMAP-Rule" id="MF_01969"/>
    </source>
</evidence>
<evidence type="ECO:0000269" key="2">
    <source>
    </source>
</evidence>
<evidence type="ECO:0000303" key="3">
    <source>
    </source>
</evidence>
<evidence type="ECO:0000305" key="4">
    <source>
    </source>
</evidence>
<evidence type="ECO:0007744" key="5">
    <source>
        <dbReference type="PDB" id="4COG"/>
    </source>
</evidence>
<evidence type="ECO:0007829" key="6">
    <source>
        <dbReference type="PDB" id="4COG"/>
    </source>
</evidence>
<protein>
    <recommendedName>
        <fullName evidence="1 3">Kynurenine formamidase</fullName>
        <shortName evidence="1 3">KFA</shortName>
        <shortName evidence="1 3">KFase</shortName>
        <ecNumber evidence="1 2">3.5.1.9</ecNumber>
    </recommendedName>
    <alternativeName>
        <fullName evidence="1">Arylformamidase</fullName>
    </alternativeName>
    <alternativeName>
        <fullName evidence="1">N-formylkynurenine formamidase</fullName>
        <shortName evidence="1">FKF</shortName>
    </alternativeName>
</protein>
<organism>
    <name type="scientific">Burkholderia cenocepacia (strain ATCC BAA-245 / DSM 16553 / LMG 16656 / NCTC 13227 / J2315 / CF5610)</name>
    <name type="common">Burkholderia cepacia (strain J2315)</name>
    <dbReference type="NCBI Taxonomy" id="216591"/>
    <lineage>
        <taxon>Bacteria</taxon>
        <taxon>Pseudomonadati</taxon>
        <taxon>Pseudomonadota</taxon>
        <taxon>Betaproteobacteria</taxon>
        <taxon>Burkholderiales</taxon>
        <taxon>Burkholderiaceae</taxon>
        <taxon>Burkholderia</taxon>
        <taxon>Burkholderia cepacia complex</taxon>
    </lineage>
</organism>
<proteinExistence type="evidence at protein level"/>
<accession>B4E9I9</accession>
<sequence>MDTLWDISPPVSPATPVWPGDTPVAVERVWRMEAGSPVNVARLTLSPHTGAHCDAPLHYDADGAPIGAVPLDTYLGPCRVIHCIGAAPVVRPADVEAALDGVPPRVLLRTYARAAVEQWDSNFCAVAPDTVDLLAAHGVKLIGIDTPSLDPQESKTMDAHRRVRAHRMAILEGIVLDDVPPGDYELIALPLKFATLDASPVRAVLRALPAQAS</sequence>
<dbReference type="EC" id="3.5.1.9" evidence="1 2"/>
<dbReference type="EMBL" id="AM747720">
    <property type="protein sequence ID" value="CAR53090.1"/>
    <property type="molecule type" value="Genomic_DNA"/>
</dbReference>
<dbReference type="RefSeq" id="WP_012492838.1">
    <property type="nucleotide sequence ID" value="NC_011000.1"/>
</dbReference>
<dbReference type="PDB" id="4COG">
    <property type="method" value="X-ray"/>
    <property type="resolution" value="1.60 A"/>
    <property type="chains" value="A/B/C/D=1-213"/>
</dbReference>
<dbReference type="PDBsum" id="4COG"/>
<dbReference type="SMR" id="B4E9I9"/>
<dbReference type="GeneID" id="56559163"/>
<dbReference type="KEGG" id="bcj:BCAL2790"/>
<dbReference type="eggNOG" id="COG1878">
    <property type="taxonomic scope" value="Bacteria"/>
</dbReference>
<dbReference type="HOGENOM" id="CLU_030671_3_1_4"/>
<dbReference type="BioCyc" id="BCEN216591:G1G1V-3091-MONOMER"/>
<dbReference type="BRENDA" id="3.5.1.9">
    <property type="organism ID" value="8982"/>
</dbReference>
<dbReference type="UniPathway" id="UPA00333">
    <property type="reaction ID" value="UER00454"/>
</dbReference>
<dbReference type="EvolutionaryTrace" id="B4E9I9"/>
<dbReference type="Proteomes" id="UP000001035">
    <property type="component" value="Chromosome 1"/>
</dbReference>
<dbReference type="GO" id="GO:0004061">
    <property type="term" value="F:arylformamidase activity"/>
    <property type="evidence" value="ECO:0000314"/>
    <property type="project" value="UniProtKB"/>
</dbReference>
<dbReference type="GO" id="GO:0004328">
    <property type="term" value="F:formamidase activity"/>
    <property type="evidence" value="ECO:0007669"/>
    <property type="project" value="InterPro"/>
</dbReference>
<dbReference type="GO" id="GO:0008270">
    <property type="term" value="F:zinc ion binding"/>
    <property type="evidence" value="ECO:0000314"/>
    <property type="project" value="UniProtKB"/>
</dbReference>
<dbReference type="GO" id="GO:0043420">
    <property type="term" value="P:anthranilate metabolic process"/>
    <property type="evidence" value="ECO:0000250"/>
    <property type="project" value="UniProtKB"/>
</dbReference>
<dbReference type="GO" id="GO:0019441">
    <property type="term" value="P:L-tryptophan catabolic process to kynurenine"/>
    <property type="evidence" value="ECO:0000250"/>
    <property type="project" value="UniProtKB"/>
</dbReference>
<dbReference type="FunFam" id="3.50.30.50:FF:000001">
    <property type="entry name" value="Kynurenine formamidase"/>
    <property type="match status" value="1"/>
</dbReference>
<dbReference type="Gene3D" id="3.50.30.50">
    <property type="entry name" value="Putative cyclase"/>
    <property type="match status" value="1"/>
</dbReference>
<dbReference type="HAMAP" id="MF_01969">
    <property type="entry name" value="KynB"/>
    <property type="match status" value="1"/>
</dbReference>
<dbReference type="InterPro" id="IPR007325">
    <property type="entry name" value="KFase/CYL"/>
</dbReference>
<dbReference type="InterPro" id="IPR037175">
    <property type="entry name" value="KFase_sf"/>
</dbReference>
<dbReference type="InterPro" id="IPR017484">
    <property type="entry name" value="Kynurenine_formamidase_bac"/>
</dbReference>
<dbReference type="NCBIfam" id="TIGR03035">
    <property type="entry name" value="trp_arylform"/>
    <property type="match status" value="1"/>
</dbReference>
<dbReference type="PANTHER" id="PTHR31118">
    <property type="entry name" value="CYCLASE-LIKE PROTEIN 2"/>
    <property type="match status" value="1"/>
</dbReference>
<dbReference type="PANTHER" id="PTHR31118:SF32">
    <property type="entry name" value="KYNURENINE FORMAMIDASE"/>
    <property type="match status" value="1"/>
</dbReference>
<dbReference type="Pfam" id="PF04199">
    <property type="entry name" value="Cyclase"/>
    <property type="match status" value="1"/>
</dbReference>
<dbReference type="SUPFAM" id="SSF102198">
    <property type="entry name" value="Putative cyclase"/>
    <property type="match status" value="1"/>
</dbReference>
<gene>
    <name evidence="1" type="primary">kynB</name>
    <name type="ordered locus">BceJ2315_27280</name>
    <name type="ORF">BCAL2790</name>
</gene>
<feature type="chain" id="PRO_0000362103" description="Kynurenine formamidase">
    <location>
        <begin position="1"/>
        <end position="213"/>
    </location>
</feature>
<feature type="active site" description="Proton donor/acceptor" evidence="1 4">
    <location>
        <position position="58"/>
    </location>
</feature>
<feature type="binding site" evidence="1">
    <location>
        <position position="18"/>
    </location>
    <ligand>
        <name>substrate</name>
    </ligand>
</feature>
<feature type="binding site" evidence="1 2 5">
    <location>
        <position position="48"/>
    </location>
    <ligand>
        <name>Zn(2+)</name>
        <dbReference type="ChEBI" id="CHEBI:29105"/>
        <label>1</label>
    </ligand>
</feature>
<feature type="binding site" evidence="1 2 5">
    <location>
        <position position="52"/>
    </location>
    <ligand>
        <name>Zn(2+)</name>
        <dbReference type="ChEBI" id="CHEBI:29105"/>
        <label>1</label>
    </ligand>
</feature>
<feature type="binding site" evidence="1 2 5">
    <location>
        <position position="54"/>
    </location>
    <ligand>
        <name>Zn(2+)</name>
        <dbReference type="ChEBI" id="CHEBI:29105"/>
        <label>1</label>
    </ligand>
</feature>
<feature type="binding site" evidence="1 2 5">
    <location>
        <position position="54"/>
    </location>
    <ligand>
        <name>Zn(2+)</name>
        <dbReference type="ChEBI" id="CHEBI:29105"/>
        <label>2</label>
    </ligand>
</feature>
<feature type="binding site" evidence="1 2 5">
    <location>
        <position position="160"/>
    </location>
    <ligand>
        <name>Zn(2+)</name>
        <dbReference type="ChEBI" id="CHEBI:29105"/>
        <label>2</label>
    </ligand>
</feature>
<feature type="binding site" evidence="1 2 5">
    <location>
        <position position="172"/>
    </location>
    <ligand>
        <name>Zn(2+)</name>
        <dbReference type="ChEBI" id="CHEBI:29105"/>
        <label>1</label>
    </ligand>
</feature>
<feature type="binding site" evidence="1 2 5">
    <location>
        <position position="172"/>
    </location>
    <ligand>
        <name>Zn(2+)</name>
        <dbReference type="ChEBI" id="CHEBI:29105"/>
        <label>2</label>
    </ligand>
</feature>
<feature type="strand" evidence="6">
    <location>
        <begin position="4"/>
        <end position="6"/>
    </location>
</feature>
<feature type="strand" evidence="6">
    <location>
        <begin position="25"/>
        <end position="30"/>
    </location>
</feature>
<feature type="turn" evidence="6">
    <location>
        <begin position="32"/>
        <end position="35"/>
    </location>
</feature>
<feature type="strand" evidence="6">
    <location>
        <begin position="40"/>
        <end position="45"/>
    </location>
</feature>
<feature type="strand" evidence="6">
    <location>
        <begin position="49"/>
        <end position="54"/>
    </location>
</feature>
<feature type="helix" evidence="6">
    <location>
        <begin position="56"/>
        <end position="58"/>
    </location>
</feature>
<feature type="helix" evidence="6">
    <location>
        <begin position="66"/>
        <end position="68"/>
    </location>
</feature>
<feature type="helix" evidence="6">
    <location>
        <begin position="71"/>
        <end position="74"/>
    </location>
</feature>
<feature type="strand" evidence="6">
    <location>
        <begin position="75"/>
        <end position="82"/>
    </location>
</feature>
<feature type="helix" evidence="6">
    <location>
        <begin position="92"/>
        <end position="95"/>
    </location>
</feature>
<feature type="helix" evidence="6">
    <location>
        <begin position="96"/>
        <end position="98"/>
    </location>
</feature>
<feature type="strand" evidence="6">
    <location>
        <begin position="104"/>
        <end position="109"/>
    </location>
</feature>
<feature type="helix" evidence="6">
    <location>
        <begin position="128"/>
        <end position="136"/>
    </location>
</feature>
<feature type="strand" evidence="6">
    <location>
        <begin position="141"/>
        <end position="147"/>
    </location>
</feature>
<feature type="helix" evidence="6">
    <location>
        <begin position="158"/>
        <end position="165"/>
    </location>
</feature>
<feature type="strand" evidence="6">
    <location>
        <begin position="169"/>
        <end position="173"/>
    </location>
</feature>
<feature type="strand" evidence="6">
    <location>
        <begin position="181"/>
        <end position="187"/>
    </location>
</feature>
<feature type="strand" evidence="6">
    <location>
        <begin position="193"/>
        <end position="195"/>
    </location>
</feature>
<feature type="strand" evidence="6">
    <location>
        <begin position="197"/>
        <end position="200"/>
    </location>
</feature>
<feature type="strand" evidence="6">
    <location>
        <begin position="204"/>
        <end position="207"/>
    </location>
</feature>
<comment type="function">
    <text evidence="1 2">Catalyzes the hydrolysis of N-formyl-L-kynurenine to L-kynurenine, the second step in the kynurenine pathway of tryptophan degradation.</text>
</comment>
<comment type="catalytic activity">
    <reaction evidence="1 2">
        <text>N-formyl-L-kynurenine + H2O = L-kynurenine + formate + H(+)</text>
        <dbReference type="Rhea" id="RHEA:13009"/>
        <dbReference type="ChEBI" id="CHEBI:15377"/>
        <dbReference type="ChEBI" id="CHEBI:15378"/>
        <dbReference type="ChEBI" id="CHEBI:15740"/>
        <dbReference type="ChEBI" id="CHEBI:57959"/>
        <dbReference type="ChEBI" id="CHEBI:58629"/>
        <dbReference type="EC" id="3.5.1.9"/>
    </reaction>
</comment>
<comment type="cofactor">
    <cofactor evidence="1 2">
        <name>Zn(2+)</name>
        <dbReference type="ChEBI" id="CHEBI:29105"/>
    </cofactor>
    <text evidence="1 2">Binds 2 zinc ions per subunit.</text>
</comment>
<comment type="biophysicochemical properties">
    <kinetics>
        <KM evidence="2">0.57 mM for N-formyl-L-kynurenine</KM>
        <Vmax evidence="2">58.15 nmol/min/mg enzyme</Vmax>
        <text evidence="2">kcat is 43.94 sec(-1) for N-formyl-L-kynurenine as substrate.</text>
    </kinetics>
</comment>
<comment type="pathway">
    <text evidence="1">Amino-acid degradation; L-tryptophan degradation via kynurenine pathway; L-kynurenine from L-tryptophan: step 2/2.</text>
</comment>
<comment type="subunit">
    <text evidence="1 2">Homodimer.</text>
</comment>
<comment type="similarity">
    <text evidence="1">Belongs to the Cyclase 1 superfamily. KynB family.</text>
</comment>
<reference key="1">
    <citation type="journal article" date="2009" name="J. Bacteriol.">
        <title>The genome of Burkholderia cenocepacia J2315, an epidemic pathogen of cystic fibrosis patients.</title>
        <authorList>
            <person name="Holden M.T."/>
            <person name="Seth-Smith H.M."/>
            <person name="Crossman L.C."/>
            <person name="Sebaihia M."/>
            <person name="Bentley S.D."/>
            <person name="Cerdeno-Tarraga A.M."/>
            <person name="Thomson N.R."/>
            <person name="Bason N."/>
            <person name="Quail M.A."/>
            <person name="Sharp S."/>
            <person name="Cherevach I."/>
            <person name="Churcher C."/>
            <person name="Goodhead I."/>
            <person name="Hauser H."/>
            <person name="Holroyd N."/>
            <person name="Mungall K."/>
            <person name="Scott P."/>
            <person name="Walker D."/>
            <person name="White B."/>
            <person name="Rose H."/>
            <person name="Iversen P."/>
            <person name="Mil-Homens D."/>
            <person name="Rocha E.P."/>
            <person name="Fialho A.M."/>
            <person name="Baldwin A."/>
            <person name="Dowson C."/>
            <person name="Barrell B.G."/>
            <person name="Govan J.R."/>
            <person name="Vandamme P."/>
            <person name="Hart C.A."/>
            <person name="Mahenthiralingam E."/>
            <person name="Parkhill J."/>
        </authorList>
    </citation>
    <scope>NUCLEOTIDE SEQUENCE [LARGE SCALE GENOMIC DNA]</scope>
    <source>
        <strain>ATCC BAA-245 / DSM 16553 / LMG 16656 / NCTC 13227 / J2315 / CF5610</strain>
    </source>
</reference>
<reference key="2">
    <citation type="journal article" date="2014" name="Biochem. J.">
        <title>Structures of bacterial kynurenine formamidase reveal a crowded binuclear zinc catalytic site primed to generate a potent nucleophile.</title>
        <authorList>
            <person name="Diaz-Saez L."/>
            <person name="Srikannathasan V."/>
            <person name="Zoltner M."/>
            <person name="Hunter W.N."/>
        </authorList>
    </citation>
    <scope>X-RAY CRYSTALLOGRAPHY (1.60 ANGSTROMS) IN COMPLEX WITH ZINC IONS</scope>
    <scope>FUNCTION</scope>
    <scope>CATALYTIC ACTIVITY</scope>
    <scope>BIOPHYSICOCHEMICAL PROPERTIES</scope>
    <scope>COFACTOR</scope>
    <scope>ACTIVE SITE</scope>
    <scope>SUBUNIT</scope>
</reference>
<keyword id="KW-0002">3D-structure</keyword>
<keyword id="KW-0378">Hydrolase</keyword>
<keyword id="KW-0479">Metal-binding</keyword>
<keyword id="KW-0823">Tryptophan catabolism</keyword>
<keyword id="KW-0862">Zinc</keyword>
<name>KYNB_BURCJ</name>